<protein>
    <recommendedName>
        <fullName>Phosphoglucomutase-1</fullName>
        <shortName>PGM 1</shortName>
        <ecNumber>5.4.2.2</ecNumber>
    </recommendedName>
    <alternativeName>
        <fullName>Glucose phosphomutase 1</fullName>
    </alternativeName>
    <alternativeName>
        <fullName>Parafusin</fullName>
        <shortName>Pf</shortName>
    </alternativeName>
    <alternativeName>
        <fullName>pp63</fullName>
    </alternativeName>
</protein>
<comment type="function">
    <text>May be involved in membrane fusion in exocytosis.</text>
</comment>
<comment type="catalytic activity">
    <reaction evidence="2">
        <text>alpha-D-glucose 1-phosphate = alpha-D-glucose 6-phosphate</text>
        <dbReference type="Rhea" id="RHEA:23536"/>
        <dbReference type="ChEBI" id="CHEBI:58225"/>
        <dbReference type="ChEBI" id="CHEBI:58601"/>
        <dbReference type="EC" id="5.4.2.2"/>
    </reaction>
</comment>
<comment type="cofactor">
    <cofactor>
        <name>Mg(2+)</name>
        <dbReference type="ChEBI" id="CHEBI:18420"/>
    </cofactor>
    <text>Binds 1 Mg(2+) ion per subunit.</text>
</comment>
<comment type="subcellular location">
    <subcellularLocation>
        <location>Cytoplasm</location>
    </subcellularLocation>
</comment>
<comment type="PTM">
    <text>Phosphorylated via a calcium-dependent protein kinase. Very rapidly (within 80 ms) dephosphorylated during triggered trichocyst exocytosis.</text>
</comment>
<comment type="PTM">
    <text>O-glycosylated with a short chain of mannose residues.</text>
</comment>
<comment type="similarity">
    <text evidence="3">Belongs to the phosphohexose mutase family.</text>
</comment>
<gene>
    <name type="primary">pp63-1</name>
    <name type="ORF">GSPATT00032405001</name>
</gene>
<reference key="1">
    <citation type="journal article" date="1994" name="Proc. Natl. Acad. Sci. U.S.A.">
        <title>Cloning and sequencing of parafusin, a calcium-dependent exocytosis-related phosphoglycoprotein.</title>
        <authorList>
            <person name="Subramanian S.V."/>
            <person name="Wyroba E."/>
            <person name="Andersen A.P."/>
            <person name="Satir B.H."/>
        </authorList>
    </citation>
    <scope>NUCLEOTIDE SEQUENCE [MRNA]</scope>
    <scope>PARTIAL PROTEIN SEQUENCE</scope>
    <source>
        <strain>Stock 51</strain>
    </source>
</reference>
<reference key="2">
    <citation type="submission" date="2000-10" db="EMBL/GenBank/DDBJ databases">
        <authorList>
            <person name="Satir B.H."/>
        </authorList>
    </citation>
    <scope>SEQUENCE REVISION TO 57-58</scope>
</reference>
<reference key="3">
    <citation type="journal article" date="1997" name="Biochem. J.">
        <title>Identification of isoforms of the exocytosis-sensitive phosphoprotein PP63/parafusin in Paramecium tetraurelia and demonstration of phosphoglucomutase activity.</title>
        <authorList>
            <person name="Hauser K."/>
            <person name="Kissmehl R."/>
            <person name="Linder J."/>
            <person name="Schultz J.E."/>
            <person name="Lottspeich F."/>
            <person name="Plattner H."/>
        </authorList>
    </citation>
    <scope>NUCLEOTIDE SEQUENCE [MRNA]</scope>
    <scope>PARTIAL PROTEIN SEQUENCE</scope>
    <scope>CATALYTIC ACTIVITY</scope>
    <source>
        <strain>Stock 51</strain>
    </source>
</reference>
<reference key="4">
    <citation type="submission" date="2005-03" db="EMBL/GenBank/DDBJ databases">
        <authorList>
            <person name="Satir B.H."/>
        </authorList>
    </citation>
    <scope>NUCLEOTIDE SEQUENCE [GENOMIC DNA]</scope>
    <source>
        <strain>Stock 51</strain>
    </source>
</reference>
<reference key="5">
    <citation type="journal article" date="2006" name="Nature">
        <title>Global trends of whole-genome duplications revealed by the ciliate Paramecium tetraurelia.</title>
        <authorList>
            <person name="Aury J.-M."/>
            <person name="Jaillon O."/>
            <person name="Duret L."/>
            <person name="Noel B."/>
            <person name="Jubin C."/>
            <person name="Porcel B.M."/>
            <person name="Segurens B."/>
            <person name="Daubin V."/>
            <person name="Anthouard V."/>
            <person name="Aiach N."/>
            <person name="Arnaiz O."/>
            <person name="Billaut A."/>
            <person name="Beisson J."/>
            <person name="Blanc I."/>
            <person name="Bouhouche K."/>
            <person name="Camara F."/>
            <person name="Duharcourt S."/>
            <person name="Guigo R."/>
            <person name="Gogendeau D."/>
            <person name="Katinka M."/>
            <person name="Keller A.-M."/>
            <person name="Kissmehl R."/>
            <person name="Klotz C."/>
            <person name="Koll F."/>
            <person name="Le Mouel A."/>
            <person name="Lepere G."/>
            <person name="Malinsky S."/>
            <person name="Nowacki M."/>
            <person name="Nowak J.K."/>
            <person name="Plattner H."/>
            <person name="Poulain J."/>
            <person name="Ruiz F."/>
            <person name="Serrano V."/>
            <person name="Zagulski M."/>
            <person name="Dessen P."/>
            <person name="Betermier M."/>
            <person name="Weissenbach J."/>
            <person name="Scarpelli C."/>
            <person name="Schaechter V."/>
            <person name="Sperling L."/>
            <person name="Meyer E."/>
            <person name="Cohen J."/>
            <person name="Wincker P."/>
        </authorList>
    </citation>
    <scope>NUCLEOTIDE SEQUENCE [LARGE SCALE GENOMIC DNA]</scope>
    <source>
        <strain>Stock d4-2</strain>
    </source>
</reference>
<reference key="6">
    <citation type="journal article" date="1992" name="Proc. Natl. Acad. Sci. U.S.A.">
        <title>Carbohydrate cycling in signal transduction: parafusin, a phosphoglycoprotein and possible Ca(2+)-dependent transducer molecule in exocytosis in Paramecium.</title>
        <authorList>
            <person name="Subramanian S.V."/>
            <person name="Satir B.H."/>
        </authorList>
    </citation>
    <scope>CHARACTERIZATION</scope>
</reference>
<reference key="7">
    <citation type="journal article" date="2002" name="J. Mol. Biol.">
        <title>Crystal structure analysis of the exocytosis-sensitive phosphoprotein, pp63/parafusin (phosphoglucomutase), from Paramecium reveals significant conformational variability.</title>
        <authorList>
            <person name="Mueller S."/>
            <person name="Diederichs K."/>
            <person name="Breed J."/>
            <person name="Kissmehl R."/>
            <person name="Hauser K."/>
            <person name="Plattner H."/>
            <person name="Welte W."/>
        </authorList>
    </citation>
    <scope>X-RAY CRYSTALLOGRAPHY (2.4 ANGSTROMS)</scope>
</reference>
<accession>P47244</accession>
<accession>O02605</accession>
<accession>Q52S71</accession>
<keyword id="KW-0002">3D-structure</keyword>
<keyword id="KW-0963">Cytoplasm</keyword>
<keyword id="KW-0903">Direct protein sequencing</keyword>
<keyword id="KW-0325">Glycoprotein</keyword>
<keyword id="KW-0413">Isomerase</keyword>
<keyword id="KW-0460">Magnesium</keyword>
<keyword id="KW-0479">Metal-binding</keyword>
<keyword id="KW-0597">Phosphoprotein</keyword>
<keyword id="KW-1185">Reference proteome</keyword>
<feature type="chain" id="PRO_0000147813" description="Phosphoglucomutase-1">
    <location>
        <begin position="1"/>
        <end position="572"/>
    </location>
</feature>
<feature type="active site" description="Phosphoserine intermediate">
    <location>
        <position position="126"/>
    </location>
</feature>
<feature type="binding site" evidence="1">
    <location>
        <position position="23"/>
    </location>
    <ligand>
        <name>substrate</name>
    </ligand>
</feature>
<feature type="binding site" evidence="1">
    <location>
        <position position="27"/>
    </location>
    <ligand>
        <name>substrate</name>
    </ligand>
</feature>
<feature type="binding site" evidence="1">
    <location>
        <begin position="126"/>
        <end position="127"/>
    </location>
    <ligand>
        <name>substrate</name>
    </ligand>
</feature>
<feature type="binding site" description="via phosphate group">
    <location>
        <position position="126"/>
    </location>
    <ligand>
        <name>Mg(2+)</name>
        <dbReference type="ChEBI" id="CHEBI:18420"/>
    </ligand>
</feature>
<feature type="binding site" evidence="1">
    <location>
        <position position="140"/>
    </location>
    <ligand>
        <name>substrate</name>
    </ligand>
</feature>
<feature type="binding site">
    <location>
        <position position="308"/>
    </location>
    <ligand>
        <name>Mg(2+)</name>
        <dbReference type="ChEBI" id="CHEBI:18420"/>
    </ligand>
</feature>
<feature type="binding site">
    <location>
        <position position="310"/>
    </location>
    <ligand>
        <name>Mg(2+)</name>
        <dbReference type="ChEBI" id="CHEBI:18420"/>
    </ligand>
</feature>
<feature type="binding site" evidence="1">
    <location>
        <begin position="312"/>
        <end position="313"/>
    </location>
    <ligand>
        <name>substrate</name>
    </ligand>
</feature>
<feature type="binding site">
    <location>
        <position position="312"/>
    </location>
    <ligand>
        <name>Mg(2+)</name>
        <dbReference type="ChEBI" id="CHEBI:18420"/>
    </ligand>
</feature>
<feature type="binding site" evidence="1">
    <location>
        <position position="373"/>
    </location>
    <ligand>
        <name>substrate</name>
    </ligand>
</feature>
<feature type="binding site" evidence="1">
    <location>
        <begin position="392"/>
        <end position="394"/>
    </location>
    <ligand>
        <name>substrate</name>
    </ligand>
</feature>
<feature type="binding site" evidence="1">
    <location>
        <position position="405"/>
    </location>
    <ligand>
        <name>substrate</name>
    </ligand>
</feature>
<feature type="binding site" evidence="1">
    <location>
        <position position="527"/>
    </location>
    <ligand>
        <name>substrate</name>
    </ligand>
</feature>
<feature type="sequence conflict" description="In Ref. 1; AAB05649 and 3; AAX93766." evidence="3" ref="1 3">
    <original>MQQVIP</original>
    <variation>MVLFLLPLRLGHNLWRIE</variation>
    <location>
        <begin position="1"/>
        <end position="6"/>
    </location>
</feature>
<feature type="strand" evidence="4">
    <location>
        <begin position="9"/>
        <end position="12"/>
    </location>
</feature>
<feature type="strand" evidence="4">
    <location>
        <begin position="25"/>
        <end position="29"/>
    </location>
</feature>
<feature type="helix" evidence="4">
    <location>
        <begin position="30"/>
        <end position="33"/>
    </location>
</feature>
<feature type="helix" evidence="4">
    <location>
        <begin position="38"/>
        <end position="49"/>
    </location>
</feature>
<feature type="helix" evidence="4">
    <location>
        <begin position="52"/>
        <end position="54"/>
    </location>
</feature>
<feature type="strand" evidence="4">
    <location>
        <begin position="55"/>
        <end position="58"/>
    </location>
</feature>
<feature type="strand" evidence="4">
    <location>
        <begin position="60"/>
        <end position="65"/>
    </location>
</feature>
<feature type="helix" evidence="4">
    <location>
        <begin position="71"/>
        <end position="84"/>
    </location>
</feature>
<feature type="strand" evidence="4">
    <location>
        <begin position="88"/>
        <end position="93"/>
    </location>
</feature>
<feature type="helix" evidence="4">
    <location>
        <begin position="94"/>
        <end position="96"/>
    </location>
</feature>
<feature type="helix" evidence="4">
    <location>
        <begin position="100"/>
        <end position="113"/>
    </location>
</feature>
<feature type="strand" evidence="4">
    <location>
        <begin position="117"/>
        <end position="123"/>
    </location>
</feature>
<feature type="turn" evidence="4">
    <location>
        <begin position="132"/>
        <end position="134"/>
    </location>
</feature>
<feature type="strand" evidence="4">
    <location>
        <begin position="136"/>
        <end position="142"/>
    </location>
</feature>
<feature type="strand" evidence="4">
    <location>
        <begin position="146"/>
        <end position="148"/>
    </location>
</feature>
<feature type="helix" evidence="4">
    <location>
        <begin position="151"/>
        <end position="161"/>
    </location>
</feature>
<feature type="strand" evidence="4">
    <location>
        <begin position="166"/>
        <end position="169"/>
    </location>
</feature>
<feature type="helix" evidence="4">
    <location>
        <begin position="174"/>
        <end position="176"/>
    </location>
</feature>
<feature type="strand" evidence="4">
    <location>
        <begin position="184"/>
        <end position="190"/>
    </location>
</feature>
<feature type="strand" evidence="4">
    <location>
        <begin position="197"/>
        <end position="203"/>
    </location>
</feature>
<feature type="helix" evidence="4">
    <location>
        <begin position="207"/>
        <end position="216"/>
    </location>
</feature>
<feature type="helix" evidence="4">
    <location>
        <begin position="219"/>
        <end position="226"/>
    </location>
</feature>
<feature type="strand" evidence="4">
    <location>
        <begin position="233"/>
        <end position="236"/>
    </location>
</feature>
<feature type="helix" evidence="4">
    <location>
        <begin position="242"/>
        <end position="250"/>
    </location>
</feature>
<feature type="turn" evidence="4">
    <location>
        <begin position="251"/>
        <end position="254"/>
    </location>
</feature>
<feature type="helix" evidence="4">
    <location>
        <begin position="258"/>
        <end position="260"/>
    </location>
</feature>
<feature type="strand" evidence="4">
    <location>
        <begin position="261"/>
        <end position="263"/>
    </location>
</feature>
<feature type="helix" evidence="4">
    <location>
        <begin position="270"/>
        <end position="272"/>
    </location>
</feature>
<feature type="turn" evidence="4">
    <location>
        <begin position="279"/>
        <end position="282"/>
    </location>
</feature>
<feature type="helix" evidence="4">
    <location>
        <begin position="283"/>
        <end position="288"/>
    </location>
</feature>
<feature type="turn" evidence="4">
    <location>
        <begin position="289"/>
        <end position="292"/>
    </location>
</feature>
<feature type="helix" evidence="4">
    <location>
        <begin position="297"/>
        <end position="299"/>
    </location>
</feature>
<feature type="strand" evidence="4">
    <location>
        <begin position="302"/>
        <end position="307"/>
    </location>
</feature>
<feature type="strand" evidence="4">
    <location>
        <begin position="314"/>
        <end position="318"/>
    </location>
</feature>
<feature type="strand" evidence="4">
    <location>
        <begin position="321"/>
        <end position="323"/>
    </location>
</feature>
<feature type="helix" evidence="4">
    <location>
        <begin position="325"/>
        <end position="334"/>
    </location>
</feature>
<feature type="helix" evidence="4">
    <location>
        <begin position="336"/>
        <end position="339"/>
    </location>
</feature>
<feature type="strand" evidence="4">
    <location>
        <begin position="347"/>
        <end position="350"/>
    </location>
</feature>
<feature type="helix" evidence="4">
    <location>
        <begin position="356"/>
        <end position="364"/>
    </location>
</feature>
<feature type="strand" evidence="4">
    <location>
        <begin position="368"/>
        <end position="371"/>
    </location>
</feature>
<feature type="helix" evidence="4">
    <location>
        <begin position="375"/>
        <end position="377"/>
    </location>
</feature>
<feature type="helix" evidence="4">
    <location>
        <begin position="378"/>
        <end position="383"/>
    </location>
</feature>
<feature type="strand" evidence="4">
    <location>
        <begin position="388"/>
        <end position="392"/>
    </location>
</feature>
<feature type="turn" evidence="4">
    <location>
        <begin position="393"/>
        <end position="395"/>
    </location>
</feature>
<feature type="strand" evidence="4">
    <location>
        <begin position="396"/>
        <end position="399"/>
    </location>
</feature>
<feature type="strand" evidence="4">
    <location>
        <begin position="402"/>
        <end position="404"/>
    </location>
</feature>
<feature type="helix" evidence="4">
    <location>
        <begin position="407"/>
        <end position="421"/>
    </location>
</feature>
<feature type="turn" evidence="5">
    <location>
        <begin position="422"/>
        <end position="424"/>
    </location>
</feature>
<feature type="helix" evidence="4">
    <location>
        <begin position="431"/>
        <end position="442"/>
    </location>
</feature>
<feature type="strand" evidence="4">
    <location>
        <begin position="444"/>
        <end position="455"/>
    </location>
</feature>
<feature type="helix" evidence="4">
    <location>
        <begin position="457"/>
        <end position="468"/>
    </location>
</feature>
<feature type="helix" evidence="4">
    <location>
        <begin position="471"/>
        <end position="475"/>
    </location>
</feature>
<feature type="strand" evidence="4">
    <location>
        <begin position="482"/>
        <end position="485"/>
    </location>
</feature>
<feature type="turn" evidence="4">
    <location>
        <begin position="491"/>
        <end position="493"/>
    </location>
</feature>
<feature type="strand" evidence="4">
    <location>
        <begin position="502"/>
        <end position="505"/>
    </location>
</feature>
<feature type="strand" evidence="4">
    <location>
        <begin position="511"/>
        <end position="516"/>
    </location>
</feature>
<feature type="strand" evidence="4">
    <location>
        <begin position="521"/>
        <end position="536"/>
    </location>
</feature>
<feature type="helix" evidence="4">
    <location>
        <begin position="542"/>
        <end position="557"/>
    </location>
</feature>
<feature type="helix" evidence="4">
    <location>
        <begin position="559"/>
        <end position="563"/>
    </location>
</feature>
<feature type="strand" evidence="4">
    <location>
        <begin position="569"/>
        <end position="571"/>
    </location>
</feature>
<name>PGM1_PARTE</name>
<organism>
    <name type="scientific">Paramecium tetraurelia</name>
    <dbReference type="NCBI Taxonomy" id="5888"/>
    <lineage>
        <taxon>Eukaryota</taxon>
        <taxon>Sar</taxon>
        <taxon>Alveolata</taxon>
        <taxon>Ciliophora</taxon>
        <taxon>Intramacronucleata</taxon>
        <taxon>Oligohymenophorea</taxon>
        <taxon>Peniculida</taxon>
        <taxon>Parameciidae</taxon>
        <taxon>Paramecium</taxon>
    </lineage>
</organism>
<evidence type="ECO:0000250" key="1">
    <source>
        <dbReference type="UniProtKB" id="P00949"/>
    </source>
</evidence>
<evidence type="ECO:0000269" key="2">
    <source>
    </source>
</evidence>
<evidence type="ECO:0000305" key="3"/>
<evidence type="ECO:0007829" key="4">
    <source>
        <dbReference type="PDB" id="1KFI"/>
    </source>
</evidence>
<evidence type="ECO:0007829" key="5">
    <source>
        <dbReference type="PDB" id="1KFQ"/>
    </source>
</evidence>
<sequence length="572" mass="63806">MQQVIPAPRVQVTQPYAGQKPGTSGLRKKVSEATQPNYLENFVQSIFNTLRKDELKPKNVLFVGGDGRYFNRQAIFSIIRLAYANDISEVHVGQAGLMSTPASSHYIRKVNEEVGNCIGGIILTASHNPGGKEHGDFGIKFNVRTGAPAPEDFTDQIYTHTTKIKEYLTVDYEFEKHINLDQIGVYKFEGTRLEKSHFEVKVVDTVQDYTQLMQKLFDFDLLKGLFSNKDFSFRFDGMHGVAGPYAKHIFGTLLGCSKESLLNCDPSEDFGGGHPDPNLTYAHDLVELLDIHKKKDVGTVPQFGAACDGDADRNMILGRQFFVTPSDSLAVIAANANLIFKNGLLGAARSMPTSGALDKVAAKNGIKLFETPTGWKFFGNLMDAGLINLCGEESFGTGSNHIREKDGIWAVLAWLTILAHKNKNTDHFVTVEEIVTQYWQQFGRNYYSRYDYEQVDSAGANKMMEHLKTKFQYFEQLKQGNKADIYDYVDPVDQSVSKNQGVRFVFGDGSRIIFRLSGTGSVGATIRIYFEQFEQQQIQHETATALANIIKLGLEISDIAQFTGRNEPTVIT</sequence>
<proteinExistence type="evidence at protein level"/>
<dbReference type="EC" id="5.4.2.2"/>
<dbReference type="EMBL" id="L12471">
    <property type="protein sequence ID" value="AAB05649.2"/>
    <property type="molecule type" value="mRNA"/>
</dbReference>
<dbReference type="EMBL" id="Y09969">
    <property type="protein sequence ID" value="CAA71088.1"/>
    <property type="molecule type" value="mRNA"/>
</dbReference>
<dbReference type="EMBL" id="AY970820">
    <property type="protein sequence ID" value="AAX93766.1"/>
    <property type="molecule type" value="Genomic_DNA"/>
</dbReference>
<dbReference type="EMBL" id="CT868018">
    <property type="protein sequence ID" value="CAK62173.1"/>
    <property type="molecule type" value="Genomic_DNA"/>
</dbReference>
<dbReference type="RefSeq" id="XP_001429571.1">
    <property type="nucleotide sequence ID" value="XM_001429534.1"/>
</dbReference>
<dbReference type="PDB" id="1KFI">
    <property type="method" value="X-ray"/>
    <property type="resolution" value="2.40 A"/>
    <property type="chains" value="A/B=1-572"/>
</dbReference>
<dbReference type="PDB" id="1KFQ">
    <property type="method" value="X-ray"/>
    <property type="resolution" value="2.40 A"/>
    <property type="chains" value="A/B=1-572"/>
</dbReference>
<dbReference type="PDBsum" id="1KFI"/>
<dbReference type="PDBsum" id="1KFQ"/>
<dbReference type="SMR" id="P47244"/>
<dbReference type="FunCoup" id="P47244">
    <property type="interactions" value="236"/>
</dbReference>
<dbReference type="STRING" id="5888.P47244"/>
<dbReference type="EnsemblProtists" id="CAK62173">
    <property type="protein sequence ID" value="CAK62173"/>
    <property type="gene ID" value="GSPATT00032405001"/>
</dbReference>
<dbReference type="GeneID" id="5015355"/>
<dbReference type="KEGG" id="ptm:GSPATT00032405001"/>
<dbReference type="eggNOG" id="KOG0625">
    <property type="taxonomic scope" value="Eukaryota"/>
</dbReference>
<dbReference type="HOGENOM" id="CLU_009330_0_1_1"/>
<dbReference type="InParanoid" id="P47244"/>
<dbReference type="OMA" id="WIQDRAN"/>
<dbReference type="OrthoDB" id="2291at2759"/>
<dbReference type="EvolutionaryTrace" id="P47244"/>
<dbReference type="Proteomes" id="UP000000600">
    <property type="component" value="Partially assembled WGS sequence"/>
</dbReference>
<dbReference type="GO" id="GO:0005829">
    <property type="term" value="C:cytosol"/>
    <property type="evidence" value="ECO:0000318"/>
    <property type="project" value="GO_Central"/>
</dbReference>
<dbReference type="GO" id="GO:0000287">
    <property type="term" value="F:magnesium ion binding"/>
    <property type="evidence" value="ECO:0007669"/>
    <property type="project" value="InterPro"/>
</dbReference>
<dbReference type="GO" id="GO:0004614">
    <property type="term" value="F:phosphoglucomutase activity"/>
    <property type="evidence" value="ECO:0000318"/>
    <property type="project" value="GO_Central"/>
</dbReference>
<dbReference type="GO" id="GO:0005975">
    <property type="term" value="P:carbohydrate metabolic process"/>
    <property type="evidence" value="ECO:0000318"/>
    <property type="project" value="GO_Central"/>
</dbReference>
<dbReference type="FunFam" id="3.30.310.50:FF:000010">
    <property type="entry name" value="Phosphoglucomutase"/>
    <property type="match status" value="1"/>
</dbReference>
<dbReference type="FunFam" id="3.40.120.10:FF:000004">
    <property type="entry name" value="Phosphoglucomutase 5"/>
    <property type="match status" value="1"/>
</dbReference>
<dbReference type="Gene3D" id="3.40.120.10">
    <property type="entry name" value="Alpha-D-Glucose-1,6-Bisphosphate, subunit A, domain 3"/>
    <property type="match status" value="3"/>
</dbReference>
<dbReference type="Gene3D" id="3.30.310.50">
    <property type="entry name" value="Alpha-D-phosphohexomutase, C-terminal domain"/>
    <property type="match status" value="1"/>
</dbReference>
<dbReference type="InterPro" id="IPR005844">
    <property type="entry name" value="A-D-PHexomutase_a/b/a-I"/>
</dbReference>
<dbReference type="InterPro" id="IPR016055">
    <property type="entry name" value="A-D-PHexomutase_a/b/a-I/II/III"/>
</dbReference>
<dbReference type="InterPro" id="IPR005845">
    <property type="entry name" value="A-D-PHexomutase_a/b/a-II"/>
</dbReference>
<dbReference type="InterPro" id="IPR005846">
    <property type="entry name" value="A-D-PHexomutase_a/b/a-III"/>
</dbReference>
<dbReference type="InterPro" id="IPR036900">
    <property type="entry name" value="A-D-PHexomutase_C_sf"/>
</dbReference>
<dbReference type="InterPro" id="IPR016066">
    <property type="entry name" value="A-D-PHexomutase_CS"/>
</dbReference>
<dbReference type="InterPro" id="IPR005841">
    <property type="entry name" value="Alpha-D-phosphohexomutase_SF"/>
</dbReference>
<dbReference type="InterPro" id="IPR045244">
    <property type="entry name" value="PGM"/>
</dbReference>
<dbReference type="NCBIfam" id="NF005737">
    <property type="entry name" value="PRK07564.1-1"/>
    <property type="match status" value="1"/>
</dbReference>
<dbReference type="PANTHER" id="PTHR22573:SF2">
    <property type="entry name" value="PHOSPHOGLUCOMUTASE"/>
    <property type="match status" value="1"/>
</dbReference>
<dbReference type="PANTHER" id="PTHR22573">
    <property type="entry name" value="PHOSPHOHEXOMUTASE FAMILY MEMBER"/>
    <property type="match status" value="1"/>
</dbReference>
<dbReference type="Pfam" id="PF24947">
    <property type="entry name" value="PGM1_C_vert_fung"/>
    <property type="match status" value="1"/>
</dbReference>
<dbReference type="Pfam" id="PF02878">
    <property type="entry name" value="PGM_PMM_I"/>
    <property type="match status" value="1"/>
</dbReference>
<dbReference type="Pfam" id="PF02879">
    <property type="entry name" value="PGM_PMM_II"/>
    <property type="match status" value="1"/>
</dbReference>
<dbReference type="Pfam" id="PF02880">
    <property type="entry name" value="PGM_PMM_III"/>
    <property type="match status" value="1"/>
</dbReference>
<dbReference type="PRINTS" id="PR00509">
    <property type="entry name" value="PGMPMM"/>
</dbReference>
<dbReference type="SUPFAM" id="SSF55957">
    <property type="entry name" value="Phosphoglucomutase, C-terminal domain"/>
    <property type="match status" value="1"/>
</dbReference>
<dbReference type="SUPFAM" id="SSF53738">
    <property type="entry name" value="Phosphoglucomutase, first 3 domains"/>
    <property type="match status" value="3"/>
</dbReference>
<dbReference type="PROSITE" id="PS00710">
    <property type="entry name" value="PGM_PMM"/>
    <property type="match status" value="1"/>
</dbReference>